<feature type="chain" id="PRO_0000301834" description="Riboflavin kinase">
    <location>
        <begin position="1"/>
        <end position="214"/>
    </location>
</feature>
<feature type="region of interest" description="Disordered" evidence="3">
    <location>
        <begin position="1"/>
        <end position="26"/>
    </location>
</feature>
<feature type="active site" description="Nucleophile" evidence="1">
    <location>
        <position position="116"/>
    </location>
</feature>
<feature type="binding site" evidence="2">
    <location>
        <position position="44"/>
    </location>
    <ligand>
        <name>Mg(2+)</name>
        <dbReference type="ChEBI" id="CHEBI:18420"/>
    </ligand>
</feature>
<feature type="binding site" evidence="2">
    <location>
        <position position="46"/>
    </location>
    <ligand>
        <name>Mg(2+)</name>
        <dbReference type="ChEBI" id="CHEBI:18420"/>
    </ligand>
</feature>
<name>RIFK_ASPFU</name>
<proteinExistence type="inferred from homology"/>
<evidence type="ECO:0000250" key="1"/>
<evidence type="ECO:0000250" key="2">
    <source>
        <dbReference type="UniProtKB" id="Q969G6"/>
    </source>
</evidence>
<evidence type="ECO:0000256" key="3">
    <source>
        <dbReference type="SAM" id="MobiDB-lite"/>
    </source>
</evidence>
<evidence type="ECO:0000305" key="4"/>
<keyword id="KW-0067">ATP-binding</keyword>
<keyword id="KW-0285">Flavoprotein</keyword>
<keyword id="KW-0288">FMN</keyword>
<keyword id="KW-0418">Kinase</keyword>
<keyword id="KW-0460">Magnesium</keyword>
<keyword id="KW-0479">Metal-binding</keyword>
<keyword id="KW-0547">Nucleotide-binding</keyword>
<keyword id="KW-1185">Reference proteome</keyword>
<keyword id="KW-0808">Transferase</keyword>
<keyword id="KW-0862">Zinc</keyword>
<protein>
    <recommendedName>
        <fullName>Riboflavin kinase</fullName>
        <ecNumber>2.7.1.26</ecNumber>
    </recommendedName>
    <alternativeName>
        <fullName>Flavin mononucleotide kinase 1</fullName>
    </alternativeName>
</protein>
<dbReference type="EC" id="2.7.1.26"/>
<dbReference type="EMBL" id="AAHF01000008">
    <property type="protein sequence ID" value="EAL87673.1"/>
    <property type="molecule type" value="Genomic_DNA"/>
</dbReference>
<dbReference type="RefSeq" id="XP_749711.1">
    <property type="nucleotide sequence ID" value="XM_744618.1"/>
</dbReference>
<dbReference type="SMR" id="Q4WHD2"/>
<dbReference type="FunCoup" id="Q4WHD2">
    <property type="interactions" value="373"/>
</dbReference>
<dbReference type="STRING" id="330879.Q4WHD2"/>
<dbReference type="EnsemblFungi" id="EAL87673">
    <property type="protein sequence ID" value="EAL87673"/>
    <property type="gene ID" value="AFUA_2G05820"/>
</dbReference>
<dbReference type="GeneID" id="3507072"/>
<dbReference type="KEGG" id="afm:AFUA_2G05820"/>
<dbReference type="VEuPathDB" id="FungiDB:Afu2g05820"/>
<dbReference type="eggNOG" id="KOG3110">
    <property type="taxonomic scope" value="Eukaryota"/>
</dbReference>
<dbReference type="HOGENOM" id="CLU_048437_3_2_1"/>
<dbReference type="InParanoid" id="Q4WHD2"/>
<dbReference type="OMA" id="FDCEVAR"/>
<dbReference type="OrthoDB" id="276388at2759"/>
<dbReference type="UniPathway" id="UPA00276">
    <property type="reaction ID" value="UER00406"/>
</dbReference>
<dbReference type="Proteomes" id="UP000002530">
    <property type="component" value="Chromosome 2"/>
</dbReference>
<dbReference type="GO" id="GO:0005739">
    <property type="term" value="C:mitochondrion"/>
    <property type="evidence" value="ECO:0000318"/>
    <property type="project" value="GO_Central"/>
</dbReference>
<dbReference type="GO" id="GO:0005524">
    <property type="term" value="F:ATP binding"/>
    <property type="evidence" value="ECO:0007669"/>
    <property type="project" value="UniProtKB-KW"/>
</dbReference>
<dbReference type="GO" id="GO:0046872">
    <property type="term" value="F:metal ion binding"/>
    <property type="evidence" value="ECO:0007669"/>
    <property type="project" value="UniProtKB-KW"/>
</dbReference>
<dbReference type="GO" id="GO:0008531">
    <property type="term" value="F:riboflavin kinase activity"/>
    <property type="evidence" value="ECO:0000318"/>
    <property type="project" value="GO_Central"/>
</dbReference>
<dbReference type="GO" id="GO:0009398">
    <property type="term" value="P:FMN biosynthetic process"/>
    <property type="evidence" value="ECO:0000318"/>
    <property type="project" value="GO_Central"/>
</dbReference>
<dbReference type="GO" id="GO:0009231">
    <property type="term" value="P:riboflavin biosynthetic process"/>
    <property type="evidence" value="ECO:0007669"/>
    <property type="project" value="InterPro"/>
</dbReference>
<dbReference type="GO" id="GO:0006771">
    <property type="term" value="P:riboflavin metabolic process"/>
    <property type="evidence" value="ECO:0000318"/>
    <property type="project" value="GO_Central"/>
</dbReference>
<dbReference type="FunFam" id="2.40.30.30:FF:000008">
    <property type="entry name" value="Riboflavin kinase"/>
    <property type="match status" value="1"/>
</dbReference>
<dbReference type="Gene3D" id="2.40.30.30">
    <property type="entry name" value="Riboflavin kinase-like"/>
    <property type="match status" value="1"/>
</dbReference>
<dbReference type="InterPro" id="IPR023468">
    <property type="entry name" value="Riboflavin_kinase"/>
</dbReference>
<dbReference type="InterPro" id="IPR015865">
    <property type="entry name" value="Riboflavin_kinase_bac/euk"/>
</dbReference>
<dbReference type="InterPro" id="IPR023465">
    <property type="entry name" value="Riboflavin_kinase_dom_sf"/>
</dbReference>
<dbReference type="PANTHER" id="PTHR22749:SF6">
    <property type="entry name" value="RIBOFLAVIN KINASE"/>
    <property type="match status" value="1"/>
</dbReference>
<dbReference type="PANTHER" id="PTHR22749">
    <property type="entry name" value="RIBOFLAVIN KINASE/FMN ADENYLYLTRANSFERASE"/>
    <property type="match status" value="1"/>
</dbReference>
<dbReference type="Pfam" id="PF01687">
    <property type="entry name" value="Flavokinase"/>
    <property type="match status" value="1"/>
</dbReference>
<dbReference type="SMART" id="SM00904">
    <property type="entry name" value="Flavokinase"/>
    <property type="match status" value="1"/>
</dbReference>
<dbReference type="SUPFAM" id="SSF82114">
    <property type="entry name" value="Riboflavin kinase-like"/>
    <property type="match status" value="1"/>
</dbReference>
<accession>Q4WHD2</accession>
<gene>
    <name type="primary">fmn1</name>
    <name type="ORF">AFUA_2G05820</name>
</gene>
<sequence length="214" mass="23367">MRPDGPRDPVAGPDSGPEPPYPVRLSGPVIKGFGRGSKELGIPTANIPAEGLEEYPDLQVGVYYGVVALDPAKFQYQEGQGSTSTSSTGGAEAAVLPAVLSIGYNPFYKNKTKSIEIHIMPPLSSPSPTADGAGEVKFHKLPDFYGTQLKLLILGYIRPEYDYVSLEALIEDIRVDCEVARKSLQRPAYACYIDGDEKECSDVVREQRRWLVTF</sequence>
<reference key="1">
    <citation type="journal article" date="2005" name="Nature">
        <title>Genomic sequence of the pathogenic and allergenic filamentous fungus Aspergillus fumigatus.</title>
        <authorList>
            <person name="Nierman W.C."/>
            <person name="Pain A."/>
            <person name="Anderson M.J."/>
            <person name="Wortman J.R."/>
            <person name="Kim H.S."/>
            <person name="Arroyo J."/>
            <person name="Berriman M."/>
            <person name="Abe K."/>
            <person name="Archer D.B."/>
            <person name="Bermejo C."/>
            <person name="Bennett J.W."/>
            <person name="Bowyer P."/>
            <person name="Chen D."/>
            <person name="Collins M."/>
            <person name="Coulsen R."/>
            <person name="Davies R."/>
            <person name="Dyer P.S."/>
            <person name="Farman M.L."/>
            <person name="Fedorova N."/>
            <person name="Fedorova N.D."/>
            <person name="Feldblyum T.V."/>
            <person name="Fischer R."/>
            <person name="Fosker N."/>
            <person name="Fraser A."/>
            <person name="Garcia J.L."/>
            <person name="Garcia M.J."/>
            <person name="Goble A."/>
            <person name="Goldman G.H."/>
            <person name="Gomi K."/>
            <person name="Griffith-Jones S."/>
            <person name="Gwilliam R."/>
            <person name="Haas B.J."/>
            <person name="Haas H."/>
            <person name="Harris D.E."/>
            <person name="Horiuchi H."/>
            <person name="Huang J."/>
            <person name="Humphray S."/>
            <person name="Jimenez J."/>
            <person name="Keller N."/>
            <person name="Khouri H."/>
            <person name="Kitamoto K."/>
            <person name="Kobayashi T."/>
            <person name="Konzack S."/>
            <person name="Kulkarni R."/>
            <person name="Kumagai T."/>
            <person name="Lafton A."/>
            <person name="Latge J.-P."/>
            <person name="Li W."/>
            <person name="Lord A."/>
            <person name="Lu C."/>
            <person name="Majoros W.H."/>
            <person name="May G.S."/>
            <person name="Miller B.L."/>
            <person name="Mohamoud Y."/>
            <person name="Molina M."/>
            <person name="Monod M."/>
            <person name="Mouyna I."/>
            <person name="Mulligan S."/>
            <person name="Murphy L.D."/>
            <person name="O'Neil S."/>
            <person name="Paulsen I."/>
            <person name="Penalva M.A."/>
            <person name="Pertea M."/>
            <person name="Price C."/>
            <person name="Pritchard B.L."/>
            <person name="Quail M.A."/>
            <person name="Rabbinowitsch E."/>
            <person name="Rawlins N."/>
            <person name="Rajandream M.A."/>
            <person name="Reichard U."/>
            <person name="Renauld H."/>
            <person name="Robson G.D."/>
            <person name="Rodriguez de Cordoba S."/>
            <person name="Rodriguez-Pena J.M."/>
            <person name="Ronning C.M."/>
            <person name="Rutter S."/>
            <person name="Salzberg S.L."/>
            <person name="Sanchez M."/>
            <person name="Sanchez-Ferrero J.C."/>
            <person name="Saunders D."/>
            <person name="Seeger K."/>
            <person name="Squares R."/>
            <person name="Squares S."/>
            <person name="Takeuchi M."/>
            <person name="Tekaia F."/>
            <person name="Turner G."/>
            <person name="Vazquez de Aldana C.R."/>
            <person name="Weidman J."/>
            <person name="White O."/>
            <person name="Woodward J.R."/>
            <person name="Yu J.-H."/>
            <person name="Fraser C.M."/>
            <person name="Galagan J.E."/>
            <person name="Asai K."/>
            <person name="Machida M."/>
            <person name="Hall N."/>
            <person name="Barrell B.G."/>
            <person name="Denning D.W."/>
        </authorList>
    </citation>
    <scope>NUCLEOTIDE SEQUENCE [LARGE SCALE GENOMIC DNA]</scope>
    <source>
        <strain>ATCC MYA-4609 / CBS 101355 / FGSC A1100 / Af293</strain>
    </source>
</reference>
<comment type="function">
    <text evidence="1">Catalyzes the phosphorylation of riboflavin (vitamin B2) to form flavin mononucleotide (FMN) coenzyme.</text>
</comment>
<comment type="catalytic activity">
    <reaction>
        <text>riboflavin + ATP = FMN + ADP + H(+)</text>
        <dbReference type="Rhea" id="RHEA:14357"/>
        <dbReference type="ChEBI" id="CHEBI:15378"/>
        <dbReference type="ChEBI" id="CHEBI:30616"/>
        <dbReference type="ChEBI" id="CHEBI:57986"/>
        <dbReference type="ChEBI" id="CHEBI:58210"/>
        <dbReference type="ChEBI" id="CHEBI:456216"/>
        <dbReference type="EC" id="2.7.1.26"/>
    </reaction>
</comment>
<comment type="cofactor">
    <cofactor evidence="1">
        <name>Zn(2+)</name>
        <dbReference type="ChEBI" id="CHEBI:29105"/>
    </cofactor>
    <cofactor evidence="1">
        <name>Mg(2+)</name>
        <dbReference type="ChEBI" id="CHEBI:18420"/>
    </cofactor>
    <text evidence="1">Zinc or magnesium.</text>
</comment>
<comment type="pathway">
    <text>Cofactor biosynthesis; FMN biosynthesis; FMN from riboflavin (ATP route): step 1/1.</text>
</comment>
<comment type="similarity">
    <text evidence="4">Belongs to the flavokinase family.</text>
</comment>
<organism>
    <name type="scientific">Aspergillus fumigatus (strain ATCC MYA-4609 / CBS 101355 / FGSC A1100 / Af293)</name>
    <name type="common">Neosartorya fumigata</name>
    <dbReference type="NCBI Taxonomy" id="330879"/>
    <lineage>
        <taxon>Eukaryota</taxon>
        <taxon>Fungi</taxon>
        <taxon>Dikarya</taxon>
        <taxon>Ascomycota</taxon>
        <taxon>Pezizomycotina</taxon>
        <taxon>Eurotiomycetes</taxon>
        <taxon>Eurotiomycetidae</taxon>
        <taxon>Eurotiales</taxon>
        <taxon>Aspergillaceae</taxon>
        <taxon>Aspergillus</taxon>
        <taxon>Aspergillus subgen. Fumigati</taxon>
    </lineage>
</organism>